<sequence>MLKTISPLISPTLLKVLAEMGHGDEIIFSDAHFPAHSLGPQVIRADGLSVSDLLRAIIPLFELDSYAPPLVMMAAVEGDTLDPSVEARYRDALSLEAPCPDIVRIDRYAFYERAQKAFAIVITGECAKYGNILLKKGVTP</sequence>
<keyword id="KW-0119">Carbohydrate metabolism</keyword>
<keyword id="KW-0963">Cytoplasm</keyword>
<keyword id="KW-0294">Fucose metabolism</keyword>
<keyword id="KW-0413">Isomerase</keyword>
<feature type="chain" id="PRO_1000187189" description="L-fucose mutarotase">
    <location>
        <begin position="1"/>
        <end position="140"/>
    </location>
</feature>
<feature type="active site" description="Proton donor" evidence="1">
    <location>
        <position position="22"/>
    </location>
</feature>
<feature type="binding site" evidence="1">
    <location>
        <position position="30"/>
    </location>
    <ligand>
        <name>substrate</name>
    </ligand>
</feature>
<feature type="binding site" evidence="1">
    <location>
        <position position="107"/>
    </location>
    <ligand>
        <name>substrate</name>
    </ligand>
</feature>
<feature type="binding site" evidence="1">
    <location>
        <begin position="129"/>
        <end position="131"/>
    </location>
    <ligand>
        <name>substrate</name>
    </ligand>
</feature>
<proteinExistence type="inferred from homology"/>
<organism>
    <name type="scientific">Salmonella agona (strain SL483)</name>
    <dbReference type="NCBI Taxonomy" id="454166"/>
    <lineage>
        <taxon>Bacteria</taxon>
        <taxon>Pseudomonadati</taxon>
        <taxon>Pseudomonadota</taxon>
        <taxon>Gammaproteobacteria</taxon>
        <taxon>Enterobacterales</taxon>
        <taxon>Enterobacteriaceae</taxon>
        <taxon>Salmonella</taxon>
    </lineage>
</organism>
<evidence type="ECO:0000255" key="1">
    <source>
        <dbReference type="HAMAP-Rule" id="MF_01662"/>
    </source>
</evidence>
<protein>
    <recommendedName>
        <fullName evidence="1">L-fucose mutarotase</fullName>
        <ecNumber evidence="1">5.1.3.29</ecNumber>
    </recommendedName>
    <alternativeName>
        <fullName evidence="1">Fucose 1-epimerase</fullName>
    </alternativeName>
    <alternativeName>
        <fullName evidence="1">Type-2 mutarotase</fullName>
    </alternativeName>
</protein>
<accession>B5F4S5</accession>
<dbReference type="EC" id="5.1.3.29" evidence="1"/>
<dbReference type="EMBL" id="CP001138">
    <property type="protein sequence ID" value="ACH50110.1"/>
    <property type="molecule type" value="Genomic_DNA"/>
</dbReference>
<dbReference type="RefSeq" id="WP_000920848.1">
    <property type="nucleotide sequence ID" value="NC_011149.1"/>
</dbReference>
<dbReference type="SMR" id="B5F4S5"/>
<dbReference type="KEGG" id="sea:SeAg_B3123"/>
<dbReference type="HOGENOM" id="CLU_120075_1_0_6"/>
<dbReference type="UniPathway" id="UPA00956"/>
<dbReference type="Proteomes" id="UP000008819">
    <property type="component" value="Chromosome"/>
</dbReference>
<dbReference type="GO" id="GO:0005737">
    <property type="term" value="C:cytoplasm"/>
    <property type="evidence" value="ECO:0007669"/>
    <property type="project" value="UniProtKB-SubCell"/>
</dbReference>
<dbReference type="GO" id="GO:0042806">
    <property type="term" value="F:fucose binding"/>
    <property type="evidence" value="ECO:0007669"/>
    <property type="project" value="InterPro"/>
</dbReference>
<dbReference type="GO" id="GO:0036373">
    <property type="term" value="F:L-fucose mutarotase activity"/>
    <property type="evidence" value="ECO:0007669"/>
    <property type="project" value="UniProtKB-EC"/>
</dbReference>
<dbReference type="GO" id="GO:0036065">
    <property type="term" value="P:fucosylation"/>
    <property type="evidence" value="ECO:0007669"/>
    <property type="project" value="TreeGrafter"/>
</dbReference>
<dbReference type="GO" id="GO:0042354">
    <property type="term" value="P:L-fucose metabolic process"/>
    <property type="evidence" value="ECO:0007669"/>
    <property type="project" value="UniProtKB-UniRule"/>
</dbReference>
<dbReference type="FunFam" id="3.40.1650.10:FF:000001">
    <property type="entry name" value="L-fucose mutarotase"/>
    <property type="match status" value="1"/>
</dbReference>
<dbReference type="Gene3D" id="3.40.1650.10">
    <property type="entry name" value="RbsD-like domain"/>
    <property type="match status" value="1"/>
</dbReference>
<dbReference type="HAMAP" id="MF_01662">
    <property type="entry name" value="L_fucose_rotase"/>
    <property type="match status" value="1"/>
</dbReference>
<dbReference type="InterPro" id="IPR023751">
    <property type="entry name" value="L-fucose_mutarotase"/>
</dbReference>
<dbReference type="InterPro" id="IPR023750">
    <property type="entry name" value="RbsD-like_sf"/>
</dbReference>
<dbReference type="InterPro" id="IPR050443">
    <property type="entry name" value="RbsD/FucU_mutarotase"/>
</dbReference>
<dbReference type="InterPro" id="IPR007721">
    <property type="entry name" value="RbsD_FucU"/>
</dbReference>
<dbReference type="NCBIfam" id="NF011949">
    <property type="entry name" value="PRK15420.1"/>
    <property type="match status" value="1"/>
</dbReference>
<dbReference type="PANTHER" id="PTHR31690">
    <property type="entry name" value="FUCOSE MUTAROTASE"/>
    <property type="match status" value="1"/>
</dbReference>
<dbReference type="PANTHER" id="PTHR31690:SF4">
    <property type="entry name" value="FUCOSE MUTAROTASE"/>
    <property type="match status" value="1"/>
</dbReference>
<dbReference type="Pfam" id="PF05025">
    <property type="entry name" value="RbsD_FucU"/>
    <property type="match status" value="1"/>
</dbReference>
<dbReference type="SUPFAM" id="SSF102546">
    <property type="entry name" value="RbsD-like"/>
    <property type="match status" value="1"/>
</dbReference>
<comment type="function">
    <text evidence="1">Involved in the anomeric conversion of L-fucose.</text>
</comment>
<comment type="catalytic activity">
    <reaction evidence="1">
        <text>alpha-L-fucose = beta-L-fucose</text>
        <dbReference type="Rhea" id="RHEA:25580"/>
        <dbReference type="ChEBI" id="CHEBI:42548"/>
        <dbReference type="ChEBI" id="CHEBI:42589"/>
        <dbReference type="EC" id="5.1.3.29"/>
    </reaction>
</comment>
<comment type="pathway">
    <text evidence="1">Carbohydrate metabolism; L-fucose metabolism.</text>
</comment>
<comment type="subunit">
    <text evidence="1">Homodecamer.</text>
</comment>
<comment type="subcellular location">
    <subcellularLocation>
        <location evidence="1">Cytoplasm</location>
    </subcellularLocation>
</comment>
<comment type="similarity">
    <text evidence="1">Belongs to the RbsD / FucU family. FucU mutarotase subfamily.</text>
</comment>
<gene>
    <name evidence="1" type="primary">fucU</name>
    <name type="ordered locus">SeAg_B3123</name>
</gene>
<reference key="1">
    <citation type="journal article" date="2011" name="J. Bacteriol.">
        <title>Comparative genomics of 28 Salmonella enterica isolates: evidence for CRISPR-mediated adaptive sublineage evolution.</title>
        <authorList>
            <person name="Fricke W.F."/>
            <person name="Mammel M.K."/>
            <person name="McDermott P.F."/>
            <person name="Tartera C."/>
            <person name="White D.G."/>
            <person name="Leclerc J.E."/>
            <person name="Ravel J."/>
            <person name="Cebula T.A."/>
        </authorList>
    </citation>
    <scope>NUCLEOTIDE SEQUENCE [LARGE SCALE GENOMIC DNA]</scope>
    <source>
        <strain>SL483</strain>
    </source>
</reference>
<name>FUCM_SALA4</name>